<accession>A8L5A5</accession>
<comment type="function">
    <text evidence="1">Specifically methylates guanosine-37 in various tRNAs.</text>
</comment>
<comment type="catalytic activity">
    <reaction evidence="1">
        <text>guanosine(37) in tRNA + S-adenosyl-L-methionine = N(1)-methylguanosine(37) in tRNA + S-adenosyl-L-homocysteine + H(+)</text>
        <dbReference type="Rhea" id="RHEA:36899"/>
        <dbReference type="Rhea" id="RHEA-COMP:10145"/>
        <dbReference type="Rhea" id="RHEA-COMP:10147"/>
        <dbReference type="ChEBI" id="CHEBI:15378"/>
        <dbReference type="ChEBI" id="CHEBI:57856"/>
        <dbReference type="ChEBI" id="CHEBI:59789"/>
        <dbReference type="ChEBI" id="CHEBI:73542"/>
        <dbReference type="ChEBI" id="CHEBI:74269"/>
        <dbReference type="EC" id="2.1.1.228"/>
    </reaction>
</comment>
<comment type="subunit">
    <text evidence="1">Homodimer.</text>
</comment>
<comment type="subcellular location">
    <subcellularLocation>
        <location evidence="1">Cytoplasm</location>
    </subcellularLocation>
</comment>
<comment type="similarity">
    <text evidence="1">Belongs to the RNA methyltransferase TrmD family.</text>
</comment>
<feature type="chain" id="PRO_1000130174" description="tRNA (guanine-N(1)-)-methyltransferase">
    <location>
        <begin position="1"/>
        <end position="283"/>
    </location>
</feature>
<feature type="binding site" evidence="1">
    <location>
        <position position="113"/>
    </location>
    <ligand>
        <name>S-adenosyl-L-methionine</name>
        <dbReference type="ChEBI" id="CHEBI:59789"/>
    </ligand>
</feature>
<feature type="binding site" evidence="1">
    <location>
        <begin position="133"/>
        <end position="138"/>
    </location>
    <ligand>
        <name>S-adenosyl-L-methionine</name>
        <dbReference type="ChEBI" id="CHEBI:59789"/>
    </ligand>
</feature>
<keyword id="KW-0963">Cytoplasm</keyword>
<keyword id="KW-0489">Methyltransferase</keyword>
<keyword id="KW-0949">S-adenosyl-L-methionine</keyword>
<keyword id="KW-0808">Transferase</keyword>
<keyword id="KW-0819">tRNA processing</keyword>
<reference key="1">
    <citation type="journal article" date="2007" name="Genome Res.">
        <title>Genome characteristics of facultatively symbiotic Frankia sp. strains reflect host range and host plant biogeography.</title>
        <authorList>
            <person name="Normand P."/>
            <person name="Lapierre P."/>
            <person name="Tisa L.S."/>
            <person name="Gogarten J.P."/>
            <person name="Alloisio N."/>
            <person name="Bagnarol E."/>
            <person name="Bassi C.A."/>
            <person name="Berry A.M."/>
            <person name="Bickhart D.M."/>
            <person name="Choisne N."/>
            <person name="Couloux A."/>
            <person name="Cournoyer B."/>
            <person name="Cruveiller S."/>
            <person name="Daubin V."/>
            <person name="Demange N."/>
            <person name="Francino M.P."/>
            <person name="Goltsman E."/>
            <person name="Huang Y."/>
            <person name="Kopp O.R."/>
            <person name="Labarre L."/>
            <person name="Lapidus A."/>
            <person name="Lavire C."/>
            <person name="Marechal J."/>
            <person name="Martinez M."/>
            <person name="Mastronunzio J.E."/>
            <person name="Mullin B.C."/>
            <person name="Niemann J."/>
            <person name="Pujic P."/>
            <person name="Rawnsley T."/>
            <person name="Rouy Z."/>
            <person name="Schenowitz C."/>
            <person name="Sellstedt A."/>
            <person name="Tavares F."/>
            <person name="Tomkins J.P."/>
            <person name="Vallenet D."/>
            <person name="Valverde C."/>
            <person name="Wall L.G."/>
            <person name="Wang Y."/>
            <person name="Medigue C."/>
            <person name="Benson D.R."/>
        </authorList>
    </citation>
    <scope>NUCLEOTIDE SEQUENCE [LARGE SCALE GENOMIC DNA]</scope>
    <source>
        <strain>EAN1pec</strain>
    </source>
</reference>
<sequence length="283" mass="30643">MRIDVVTIFPDYLRPLELALVGRAASRDLVDIQTHDLRAWTHDVHRTVDDSPYGGGPGMVMRPEPWDAALRDIVARDPSRRPRVVVPTPAGVPFTQSYAAELAEQDWLIFCCGRYEGIDGRVVDAWADDEISIGDYVLAGGEVATLVMVEAVTRLLPGVVGNAESIIDDSFAHGLLEGPVYTRPPVWEGRAVPEILRSGDHAAIARWRREEALRRTCRRRPELLDRIELSDADRAVVASTIVAAHGGGDDPPVTGVEDAVTIAERGTIGDGPAPSGCASSHCS</sequence>
<protein>
    <recommendedName>
        <fullName evidence="1">tRNA (guanine-N(1)-)-methyltransferase</fullName>
        <ecNumber evidence="1">2.1.1.228</ecNumber>
    </recommendedName>
    <alternativeName>
        <fullName evidence="1">M1G-methyltransferase</fullName>
    </alternativeName>
    <alternativeName>
        <fullName evidence="1">tRNA [GM37] methyltransferase</fullName>
    </alternativeName>
</protein>
<organism>
    <name type="scientific">Parafrankia sp. (strain EAN1pec)</name>
    <dbReference type="NCBI Taxonomy" id="298653"/>
    <lineage>
        <taxon>Bacteria</taxon>
        <taxon>Bacillati</taxon>
        <taxon>Actinomycetota</taxon>
        <taxon>Actinomycetes</taxon>
        <taxon>Frankiales</taxon>
        <taxon>Frankiaceae</taxon>
        <taxon>Parafrankia</taxon>
    </lineage>
</organism>
<gene>
    <name evidence="1" type="primary">trmD</name>
    <name type="ordered locus">Franean1_1151</name>
</gene>
<proteinExistence type="inferred from homology"/>
<dbReference type="EC" id="2.1.1.228" evidence="1"/>
<dbReference type="EMBL" id="CP000820">
    <property type="protein sequence ID" value="ABW10605.1"/>
    <property type="molecule type" value="Genomic_DNA"/>
</dbReference>
<dbReference type="RefSeq" id="WP_020458782.1">
    <property type="nucleotide sequence ID" value="NC_009921.1"/>
</dbReference>
<dbReference type="SMR" id="A8L5A5"/>
<dbReference type="STRING" id="298653.Franean1_1151"/>
<dbReference type="KEGG" id="fre:Franean1_1151"/>
<dbReference type="eggNOG" id="COG0336">
    <property type="taxonomic scope" value="Bacteria"/>
</dbReference>
<dbReference type="HOGENOM" id="CLU_047363_0_0_11"/>
<dbReference type="GO" id="GO:0005829">
    <property type="term" value="C:cytosol"/>
    <property type="evidence" value="ECO:0007669"/>
    <property type="project" value="TreeGrafter"/>
</dbReference>
<dbReference type="GO" id="GO:0052906">
    <property type="term" value="F:tRNA (guanine(37)-N1)-methyltransferase activity"/>
    <property type="evidence" value="ECO:0007669"/>
    <property type="project" value="UniProtKB-UniRule"/>
</dbReference>
<dbReference type="GO" id="GO:0002939">
    <property type="term" value="P:tRNA N1-guanine methylation"/>
    <property type="evidence" value="ECO:0007669"/>
    <property type="project" value="TreeGrafter"/>
</dbReference>
<dbReference type="CDD" id="cd18080">
    <property type="entry name" value="TrmD-like"/>
    <property type="match status" value="1"/>
</dbReference>
<dbReference type="FunFam" id="1.10.1270.20:FF:000001">
    <property type="entry name" value="tRNA (guanine-N(1)-)-methyltransferase"/>
    <property type="match status" value="1"/>
</dbReference>
<dbReference type="FunFam" id="3.40.1280.10:FF:000001">
    <property type="entry name" value="tRNA (guanine-N(1)-)-methyltransferase"/>
    <property type="match status" value="1"/>
</dbReference>
<dbReference type="Gene3D" id="3.40.1280.10">
    <property type="match status" value="1"/>
</dbReference>
<dbReference type="Gene3D" id="1.10.1270.20">
    <property type="entry name" value="tRNA(m1g37)methyltransferase, domain 2"/>
    <property type="match status" value="1"/>
</dbReference>
<dbReference type="HAMAP" id="MF_00605">
    <property type="entry name" value="TrmD"/>
    <property type="match status" value="1"/>
</dbReference>
<dbReference type="InterPro" id="IPR029028">
    <property type="entry name" value="Alpha/beta_knot_MTases"/>
</dbReference>
<dbReference type="InterPro" id="IPR023148">
    <property type="entry name" value="tRNA_m1G_MeTrfase_C_sf"/>
</dbReference>
<dbReference type="InterPro" id="IPR002649">
    <property type="entry name" value="tRNA_m1G_MeTrfase_TrmD"/>
</dbReference>
<dbReference type="InterPro" id="IPR029026">
    <property type="entry name" value="tRNA_m1G_MTases_N"/>
</dbReference>
<dbReference type="InterPro" id="IPR016009">
    <property type="entry name" value="tRNA_MeTrfase_TRMD/TRM10"/>
</dbReference>
<dbReference type="NCBIfam" id="NF000648">
    <property type="entry name" value="PRK00026.1"/>
    <property type="match status" value="1"/>
</dbReference>
<dbReference type="NCBIfam" id="TIGR00088">
    <property type="entry name" value="trmD"/>
    <property type="match status" value="1"/>
</dbReference>
<dbReference type="PANTHER" id="PTHR46417">
    <property type="entry name" value="TRNA (GUANINE-N(1)-)-METHYLTRANSFERASE"/>
    <property type="match status" value="1"/>
</dbReference>
<dbReference type="PANTHER" id="PTHR46417:SF1">
    <property type="entry name" value="TRNA (GUANINE-N(1)-)-METHYLTRANSFERASE"/>
    <property type="match status" value="1"/>
</dbReference>
<dbReference type="Pfam" id="PF01746">
    <property type="entry name" value="tRNA_m1G_MT"/>
    <property type="match status" value="1"/>
</dbReference>
<dbReference type="PIRSF" id="PIRSF000386">
    <property type="entry name" value="tRNA_mtase"/>
    <property type="match status" value="1"/>
</dbReference>
<dbReference type="SUPFAM" id="SSF75217">
    <property type="entry name" value="alpha/beta knot"/>
    <property type="match status" value="1"/>
</dbReference>
<name>TRMD_PARS2</name>
<evidence type="ECO:0000255" key="1">
    <source>
        <dbReference type="HAMAP-Rule" id="MF_00605"/>
    </source>
</evidence>